<proteinExistence type="evidence at protein level"/>
<evidence type="ECO:0000269" key="1">
    <source>
    </source>
</evidence>
<evidence type="ECO:0000269" key="2">
    <source>
    </source>
</evidence>
<evidence type="ECO:0000269" key="3">
    <source>
    </source>
</evidence>
<evidence type="ECO:0000303" key="4">
    <source>
    </source>
</evidence>
<evidence type="ECO:0000305" key="5"/>
<evidence type="ECO:0007744" key="6">
    <source>
    </source>
</evidence>
<evidence type="ECO:0007829" key="7">
    <source>
        <dbReference type="PDB" id="4I79"/>
    </source>
</evidence>
<feature type="chain" id="PRO_0000051111" description="Nucleoporin Nup43">
    <location>
        <begin position="1"/>
        <end position="380"/>
    </location>
</feature>
<feature type="repeat" description="WD 1">
    <location>
        <begin position="8"/>
        <end position="57"/>
    </location>
</feature>
<feature type="repeat" description="WD 2">
    <location>
        <begin position="72"/>
        <end position="110"/>
    </location>
</feature>
<feature type="repeat" description="WD 3">
    <location>
        <begin position="127"/>
        <end position="166"/>
    </location>
</feature>
<feature type="repeat" description="WD 4">
    <location>
        <begin position="170"/>
        <end position="208"/>
    </location>
</feature>
<feature type="repeat" description="WD 5">
    <location>
        <begin position="215"/>
        <end position="255"/>
    </location>
</feature>
<feature type="repeat" description="WD 6">
    <location>
        <begin position="259"/>
        <end position="299"/>
    </location>
</feature>
<feature type="modified residue" description="N-acetylmethionine" evidence="6">
    <location>
        <position position="1"/>
    </location>
</feature>
<feature type="splice variant" id="VSP_056167" description="In isoform 2." evidence="4">
    <original>DNADSSTLHAVTFLRTPEILTVNSIGQLKIWDFRQQGNEPSQILSLTGDRVPLHCVDRHPNQQHVVATGGQDGMLSIWDVRQGTMPVSLLKAHEAEM</original>
    <variation>V</variation>
    <location>
        <begin position="168"/>
        <end position="264"/>
    </location>
</feature>
<feature type="sequence conflict" description="In Ref. 2; BAB14536." evidence="5" ref="2">
    <original>V</original>
    <variation>A</variation>
    <location>
        <position position="247"/>
    </location>
</feature>
<feature type="strand" evidence="7">
    <location>
        <begin position="5"/>
        <end position="8"/>
    </location>
</feature>
<feature type="strand" evidence="7">
    <location>
        <begin position="10"/>
        <end position="18"/>
    </location>
</feature>
<feature type="strand" evidence="7">
    <location>
        <begin position="31"/>
        <end position="48"/>
    </location>
</feature>
<feature type="strand" evidence="7">
    <location>
        <begin position="66"/>
        <end position="75"/>
    </location>
</feature>
<feature type="strand" evidence="7">
    <location>
        <begin position="77"/>
        <end position="92"/>
    </location>
</feature>
<feature type="strand" evidence="7">
    <location>
        <begin position="97"/>
        <end position="102"/>
    </location>
</feature>
<feature type="turn" evidence="7">
    <location>
        <begin position="104"/>
        <end position="106"/>
    </location>
</feature>
<feature type="strand" evidence="7">
    <location>
        <begin position="109"/>
        <end position="115"/>
    </location>
</feature>
<feature type="strand" evidence="7">
    <location>
        <begin position="118"/>
        <end position="120"/>
    </location>
</feature>
<feature type="strand" evidence="7">
    <location>
        <begin position="134"/>
        <end position="140"/>
    </location>
</feature>
<feature type="strand" evidence="7">
    <location>
        <begin position="143"/>
        <end position="148"/>
    </location>
</feature>
<feature type="strand" evidence="7">
    <location>
        <begin position="151"/>
        <end position="157"/>
    </location>
</feature>
<feature type="strand" evidence="7">
    <location>
        <begin position="164"/>
        <end position="168"/>
    </location>
</feature>
<feature type="strand" evidence="7">
    <location>
        <begin position="175"/>
        <end position="182"/>
    </location>
</feature>
<feature type="strand" evidence="7">
    <location>
        <begin position="185"/>
        <end position="190"/>
    </location>
</feature>
<feature type="strand" evidence="7">
    <location>
        <begin position="193"/>
        <end position="199"/>
    </location>
</feature>
<feature type="strand" evidence="7">
    <location>
        <begin position="203"/>
        <end position="205"/>
    </location>
</feature>
<feature type="strand" evidence="7">
    <location>
        <begin position="208"/>
        <end position="212"/>
    </location>
</feature>
<feature type="strand" evidence="7">
    <location>
        <begin position="214"/>
        <end position="217"/>
    </location>
</feature>
<feature type="strand" evidence="7">
    <location>
        <begin position="220"/>
        <end position="225"/>
    </location>
</feature>
<feature type="strand" evidence="7">
    <location>
        <begin position="232"/>
        <end position="237"/>
    </location>
</feature>
<feature type="strand" evidence="7">
    <location>
        <begin position="242"/>
        <end position="246"/>
    </location>
</feature>
<feature type="strand" evidence="7">
    <location>
        <begin position="254"/>
        <end position="257"/>
    </location>
</feature>
<feature type="strand" evidence="7">
    <location>
        <begin position="264"/>
        <end position="269"/>
    </location>
</feature>
<feature type="strand" evidence="7">
    <location>
        <begin position="276"/>
        <end position="281"/>
    </location>
</feature>
<feature type="strand" evidence="7">
    <location>
        <begin position="286"/>
        <end position="290"/>
    </location>
</feature>
<feature type="strand" evidence="7">
    <location>
        <begin position="341"/>
        <end position="344"/>
    </location>
</feature>
<feature type="strand" evidence="7">
    <location>
        <begin position="353"/>
        <end position="359"/>
    </location>
</feature>
<feature type="strand" evidence="7">
    <location>
        <begin position="362"/>
        <end position="367"/>
    </location>
</feature>
<feature type="strand" evidence="7">
    <location>
        <begin position="370"/>
        <end position="376"/>
    </location>
</feature>
<organism>
    <name type="scientific">Homo sapiens</name>
    <name type="common">Human</name>
    <dbReference type="NCBI Taxonomy" id="9606"/>
    <lineage>
        <taxon>Eukaryota</taxon>
        <taxon>Metazoa</taxon>
        <taxon>Chordata</taxon>
        <taxon>Craniata</taxon>
        <taxon>Vertebrata</taxon>
        <taxon>Euteleostomi</taxon>
        <taxon>Mammalia</taxon>
        <taxon>Eutheria</taxon>
        <taxon>Euarchontoglires</taxon>
        <taxon>Primates</taxon>
        <taxon>Haplorrhini</taxon>
        <taxon>Catarrhini</taxon>
        <taxon>Hominidae</taxon>
        <taxon>Homo</taxon>
    </lineage>
</organism>
<reference key="1">
    <citation type="journal article" date="2002" name="J. Cell Biol.">
        <title>Proteomic analysis of the mammalian nuclear pore complex.</title>
        <authorList>
            <person name="Cronshaw J.M."/>
            <person name="Krutchinsky A.N."/>
            <person name="Zhang W."/>
            <person name="Chait B.T."/>
            <person name="Matunis M.J."/>
        </authorList>
    </citation>
    <scope>NUCLEOTIDE SEQUENCE [MRNA] (ISOFORM 1)</scope>
    <scope>SUBCELLULAR LOCATION</scope>
</reference>
<reference key="2">
    <citation type="journal article" date="2004" name="Nat. Genet.">
        <title>Complete sequencing and characterization of 21,243 full-length human cDNAs.</title>
        <authorList>
            <person name="Ota T."/>
            <person name="Suzuki Y."/>
            <person name="Nishikawa T."/>
            <person name="Otsuki T."/>
            <person name="Sugiyama T."/>
            <person name="Irie R."/>
            <person name="Wakamatsu A."/>
            <person name="Hayashi K."/>
            <person name="Sato H."/>
            <person name="Nagai K."/>
            <person name="Kimura K."/>
            <person name="Makita H."/>
            <person name="Sekine M."/>
            <person name="Obayashi M."/>
            <person name="Nishi T."/>
            <person name="Shibahara T."/>
            <person name="Tanaka T."/>
            <person name="Ishii S."/>
            <person name="Yamamoto J."/>
            <person name="Saito K."/>
            <person name="Kawai Y."/>
            <person name="Isono Y."/>
            <person name="Nakamura Y."/>
            <person name="Nagahari K."/>
            <person name="Murakami K."/>
            <person name="Yasuda T."/>
            <person name="Iwayanagi T."/>
            <person name="Wagatsuma M."/>
            <person name="Shiratori A."/>
            <person name="Sudo H."/>
            <person name="Hosoiri T."/>
            <person name="Kaku Y."/>
            <person name="Kodaira H."/>
            <person name="Kondo H."/>
            <person name="Sugawara M."/>
            <person name="Takahashi M."/>
            <person name="Kanda K."/>
            <person name="Yokoi T."/>
            <person name="Furuya T."/>
            <person name="Kikkawa E."/>
            <person name="Omura Y."/>
            <person name="Abe K."/>
            <person name="Kamihara K."/>
            <person name="Katsuta N."/>
            <person name="Sato K."/>
            <person name="Tanikawa M."/>
            <person name="Yamazaki M."/>
            <person name="Ninomiya K."/>
            <person name="Ishibashi T."/>
            <person name="Yamashita H."/>
            <person name="Murakawa K."/>
            <person name="Fujimori K."/>
            <person name="Tanai H."/>
            <person name="Kimata M."/>
            <person name="Watanabe M."/>
            <person name="Hiraoka S."/>
            <person name="Chiba Y."/>
            <person name="Ishida S."/>
            <person name="Ono Y."/>
            <person name="Takiguchi S."/>
            <person name="Watanabe S."/>
            <person name="Yosida M."/>
            <person name="Hotuta T."/>
            <person name="Kusano J."/>
            <person name="Kanehori K."/>
            <person name="Takahashi-Fujii A."/>
            <person name="Hara H."/>
            <person name="Tanase T.-O."/>
            <person name="Nomura Y."/>
            <person name="Togiya S."/>
            <person name="Komai F."/>
            <person name="Hara R."/>
            <person name="Takeuchi K."/>
            <person name="Arita M."/>
            <person name="Imose N."/>
            <person name="Musashino K."/>
            <person name="Yuuki H."/>
            <person name="Oshima A."/>
            <person name="Sasaki N."/>
            <person name="Aotsuka S."/>
            <person name="Yoshikawa Y."/>
            <person name="Matsunawa H."/>
            <person name="Ichihara T."/>
            <person name="Shiohata N."/>
            <person name="Sano S."/>
            <person name="Moriya S."/>
            <person name="Momiyama H."/>
            <person name="Satoh N."/>
            <person name="Takami S."/>
            <person name="Terashima Y."/>
            <person name="Suzuki O."/>
            <person name="Nakagawa S."/>
            <person name="Senoh A."/>
            <person name="Mizoguchi H."/>
            <person name="Goto Y."/>
            <person name="Shimizu F."/>
            <person name="Wakebe H."/>
            <person name="Hishigaki H."/>
            <person name="Watanabe T."/>
            <person name="Sugiyama A."/>
            <person name="Takemoto M."/>
            <person name="Kawakami B."/>
            <person name="Yamazaki M."/>
            <person name="Watanabe K."/>
            <person name="Kumagai A."/>
            <person name="Itakura S."/>
            <person name="Fukuzumi Y."/>
            <person name="Fujimori Y."/>
            <person name="Komiyama M."/>
            <person name="Tashiro H."/>
            <person name="Tanigami A."/>
            <person name="Fujiwara T."/>
            <person name="Ono T."/>
            <person name="Yamada K."/>
            <person name="Fujii Y."/>
            <person name="Ozaki K."/>
            <person name="Hirao M."/>
            <person name="Ohmori Y."/>
            <person name="Kawabata A."/>
            <person name="Hikiji T."/>
            <person name="Kobatake N."/>
            <person name="Inagaki H."/>
            <person name="Ikema Y."/>
            <person name="Okamoto S."/>
            <person name="Okitani R."/>
            <person name="Kawakami T."/>
            <person name="Noguchi S."/>
            <person name="Itoh T."/>
            <person name="Shigeta K."/>
            <person name="Senba T."/>
            <person name="Matsumura K."/>
            <person name="Nakajima Y."/>
            <person name="Mizuno T."/>
            <person name="Morinaga M."/>
            <person name="Sasaki M."/>
            <person name="Togashi T."/>
            <person name="Oyama M."/>
            <person name="Hata H."/>
            <person name="Watanabe M."/>
            <person name="Komatsu T."/>
            <person name="Mizushima-Sugano J."/>
            <person name="Satoh T."/>
            <person name="Shirai Y."/>
            <person name="Takahashi Y."/>
            <person name="Nakagawa K."/>
            <person name="Okumura K."/>
            <person name="Nagase T."/>
            <person name="Nomura N."/>
            <person name="Kikuchi H."/>
            <person name="Masuho Y."/>
            <person name="Yamashita R."/>
            <person name="Nakai K."/>
            <person name="Yada T."/>
            <person name="Nakamura Y."/>
            <person name="Ohara O."/>
            <person name="Isogai T."/>
            <person name="Sugano S."/>
        </authorList>
    </citation>
    <scope>NUCLEOTIDE SEQUENCE [LARGE SCALE MRNA] (ISOFORM 2)</scope>
    <scope>NUCLEOTIDE SEQUENCE [LARGE SCALE MRNA] OF 247-380 (ISOFORM 1)</scope>
    <source>
        <tissue>Ovarian carcinoma</tissue>
        <tissue>Trachea</tissue>
    </source>
</reference>
<reference key="3">
    <citation type="journal article" date="2003" name="Nature">
        <title>The DNA sequence and analysis of human chromosome 6.</title>
        <authorList>
            <person name="Mungall A.J."/>
            <person name="Palmer S.A."/>
            <person name="Sims S.K."/>
            <person name="Edwards C.A."/>
            <person name="Ashurst J.L."/>
            <person name="Wilming L."/>
            <person name="Jones M.C."/>
            <person name="Horton R."/>
            <person name="Hunt S.E."/>
            <person name="Scott C.E."/>
            <person name="Gilbert J.G.R."/>
            <person name="Clamp M.E."/>
            <person name="Bethel G."/>
            <person name="Milne S."/>
            <person name="Ainscough R."/>
            <person name="Almeida J.P."/>
            <person name="Ambrose K.D."/>
            <person name="Andrews T.D."/>
            <person name="Ashwell R.I.S."/>
            <person name="Babbage A.K."/>
            <person name="Bagguley C.L."/>
            <person name="Bailey J."/>
            <person name="Banerjee R."/>
            <person name="Barker D.J."/>
            <person name="Barlow K.F."/>
            <person name="Bates K."/>
            <person name="Beare D.M."/>
            <person name="Beasley H."/>
            <person name="Beasley O."/>
            <person name="Bird C.P."/>
            <person name="Blakey S.E."/>
            <person name="Bray-Allen S."/>
            <person name="Brook J."/>
            <person name="Brown A.J."/>
            <person name="Brown J.Y."/>
            <person name="Burford D.C."/>
            <person name="Burrill W."/>
            <person name="Burton J."/>
            <person name="Carder C."/>
            <person name="Carter N.P."/>
            <person name="Chapman J.C."/>
            <person name="Clark S.Y."/>
            <person name="Clark G."/>
            <person name="Clee C.M."/>
            <person name="Clegg S."/>
            <person name="Cobley V."/>
            <person name="Collier R.E."/>
            <person name="Collins J.E."/>
            <person name="Colman L.K."/>
            <person name="Corby N.R."/>
            <person name="Coville G.J."/>
            <person name="Culley K.M."/>
            <person name="Dhami P."/>
            <person name="Davies J."/>
            <person name="Dunn M."/>
            <person name="Earthrowl M.E."/>
            <person name="Ellington A.E."/>
            <person name="Evans K.A."/>
            <person name="Faulkner L."/>
            <person name="Francis M.D."/>
            <person name="Frankish A."/>
            <person name="Frankland J."/>
            <person name="French L."/>
            <person name="Garner P."/>
            <person name="Garnett J."/>
            <person name="Ghori M.J."/>
            <person name="Gilby L.M."/>
            <person name="Gillson C.J."/>
            <person name="Glithero R.J."/>
            <person name="Grafham D.V."/>
            <person name="Grant M."/>
            <person name="Gribble S."/>
            <person name="Griffiths C."/>
            <person name="Griffiths M.N.D."/>
            <person name="Hall R."/>
            <person name="Halls K.S."/>
            <person name="Hammond S."/>
            <person name="Harley J.L."/>
            <person name="Hart E.A."/>
            <person name="Heath P.D."/>
            <person name="Heathcott R."/>
            <person name="Holmes S.J."/>
            <person name="Howden P.J."/>
            <person name="Howe K.L."/>
            <person name="Howell G.R."/>
            <person name="Huckle E."/>
            <person name="Humphray S.J."/>
            <person name="Humphries M.D."/>
            <person name="Hunt A.R."/>
            <person name="Johnson C.M."/>
            <person name="Joy A.A."/>
            <person name="Kay M."/>
            <person name="Keenan S.J."/>
            <person name="Kimberley A.M."/>
            <person name="King A."/>
            <person name="Laird G.K."/>
            <person name="Langford C."/>
            <person name="Lawlor S."/>
            <person name="Leongamornlert D.A."/>
            <person name="Leversha M."/>
            <person name="Lloyd C.R."/>
            <person name="Lloyd D.M."/>
            <person name="Loveland J.E."/>
            <person name="Lovell J."/>
            <person name="Martin S."/>
            <person name="Mashreghi-Mohammadi M."/>
            <person name="Maslen G.L."/>
            <person name="Matthews L."/>
            <person name="McCann O.T."/>
            <person name="McLaren S.J."/>
            <person name="McLay K."/>
            <person name="McMurray A."/>
            <person name="Moore M.J.F."/>
            <person name="Mullikin J.C."/>
            <person name="Niblett D."/>
            <person name="Nickerson T."/>
            <person name="Novik K.L."/>
            <person name="Oliver K."/>
            <person name="Overton-Larty E.K."/>
            <person name="Parker A."/>
            <person name="Patel R."/>
            <person name="Pearce A.V."/>
            <person name="Peck A.I."/>
            <person name="Phillimore B.J.C.T."/>
            <person name="Phillips S."/>
            <person name="Plumb R.W."/>
            <person name="Porter K.M."/>
            <person name="Ramsey Y."/>
            <person name="Ranby S.A."/>
            <person name="Rice C.M."/>
            <person name="Ross M.T."/>
            <person name="Searle S.M."/>
            <person name="Sehra H.K."/>
            <person name="Sheridan E."/>
            <person name="Skuce C.D."/>
            <person name="Smith S."/>
            <person name="Smith M."/>
            <person name="Spraggon L."/>
            <person name="Squares S.L."/>
            <person name="Steward C.A."/>
            <person name="Sycamore N."/>
            <person name="Tamlyn-Hall G."/>
            <person name="Tester J."/>
            <person name="Theaker A.J."/>
            <person name="Thomas D.W."/>
            <person name="Thorpe A."/>
            <person name="Tracey A."/>
            <person name="Tromans A."/>
            <person name="Tubby B."/>
            <person name="Wall M."/>
            <person name="Wallis J.M."/>
            <person name="West A.P."/>
            <person name="White S.S."/>
            <person name="Whitehead S.L."/>
            <person name="Whittaker H."/>
            <person name="Wild A."/>
            <person name="Willey D.J."/>
            <person name="Wilmer T.E."/>
            <person name="Wood J.M."/>
            <person name="Wray P.W."/>
            <person name="Wyatt J.C."/>
            <person name="Young L."/>
            <person name="Younger R.M."/>
            <person name="Bentley D.R."/>
            <person name="Coulson A."/>
            <person name="Durbin R.M."/>
            <person name="Hubbard T."/>
            <person name="Sulston J.E."/>
            <person name="Dunham I."/>
            <person name="Rogers J."/>
            <person name="Beck S."/>
        </authorList>
    </citation>
    <scope>NUCLEOTIDE SEQUENCE [LARGE SCALE GENOMIC DNA]</scope>
</reference>
<reference key="4">
    <citation type="journal article" date="2004" name="Genome Res.">
        <title>The status, quality, and expansion of the NIH full-length cDNA project: the Mammalian Gene Collection (MGC).</title>
        <authorList>
            <consortium name="The MGC Project Team"/>
        </authorList>
    </citation>
    <scope>NUCLEOTIDE SEQUENCE [LARGE SCALE MRNA] (ISOFORM 1)</scope>
    <source>
        <tissue>Testis</tissue>
    </source>
</reference>
<reference key="5">
    <citation type="journal article" date="2004" name="Mol. Biol. Cell">
        <title>The entire Nup107-160 complex, including three new members, is targeted as one entity to kinetochores in mitosis.</title>
        <authorList>
            <person name="Loieodice I."/>
            <person name="Alves A."/>
            <person name="Rabut G."/>
            <person name="Van Overbeek M."/>
            <person name="Ellenberg J."/>
            <person name="Sibarita J.-B."/>
            <person name="Doye V."/>
        </authorList>
    </citation>
    <scope>IDENTIFICATION IN THE NUP107-160 COMPLEX</scope>
    <scope>SUBCELLULAR LOCATION</scope>
</reference>
<reference key="6">
    <citation type="journal article" date="2007" name="EMBO J.">
        <title>The human Nup107-160 nuclear pore subcomplex contributes to proper kinetochore functions.</title>
        <authorList>
            <person name="Zuccolo M."/>
            <person name="Alves A."/>
            <person name="Galy V."/>
            <person name="Bolhy S."/>
            <person name="Formstecher E."/>
            <person name="Racine V."/>
            <person name="Sibarita J.-B."/>
            <person name="Fukagawa T."/>
            <person name="Shiekhattar R."/>
            <person name="Yen T."/>
            <person name="Doye V."/>
        </authorList>
    </citation>
    <scope>FUNCTION OF THE NUP107-160 COMPLEX</scope>
</reference>
<reference key="7">
    <citation type="journal article" date="2007" name="Proc. Natl. Acad. Sci. U.S.A.">
        <title>Cell-cycle-dependent phosphorylation of the nuclear pore Nup107-160 subcomplex.</title>
        <authorList>
            <person name="Glavy J.S."/>
            <person name="Krutchinsky A.N."/>
            <person name="Cristea I.M."/>
            <person name="Berke I.C."/>
            <person name="Boehmer T."/>
            <person name="Blobel G."/>
            <person name="Chait B.T."/>
        </authorList>
    </citation>
    <scope>IDENTIFICATION BY MASS SPECTROMETRY</scope>
    <scope>IDENTIFICATION IN THE NUP107-160 COMPLEX</scope>
</reference>
<reference key="8">
    <citation type="journal article" date="2011" name="BMC Syst. Biol.">
        <title>Initial characterization of the human central proteome.</title>
        <authorList>
            <person name="Burkard T.R."/>
            <person name="Planyavsky M."/>
            <person name="Kaupe I."/>
            <person name="Breitwieser F.P."/>
            <person name="Buerckstuemmer T."/>
            <person name="Bennett K.L."/>
            <person name="Superti-Furga G."/>
            <person name="Colinge J."/>
        </authorList>
    </citation>
    <scope>IDENTIFICATION BY MASS SPECTROMETRY [LARGE SCALE ANALYSIS]</scope>
</reference>
<reference key="9">
    <citation type="journal article" date="2011" name="Sci. Signal.">
        <title>System-wide temporal characterization of the proteome and phosphoproteome of human embryonic stem cell differentiation.</title>
        <authorList>
            <person name="Rigbolt K.T."/>
            <person name="Prokhorova T.A."/>
            <person name="Akimov V."/>
            <person name="Henningsen J."/>
            <person name="Johansen P.T."/>
            <person name="Kratchmarova I."/>
            <person name="Kassem M."/>
            <person name="Mann M."/>
            <person name="Olsen J.V."/>
            <person name="Blagoev B."/>
        </authorList>
    </citation>
    <scope>IDENTIFICATION BY MASS SPECTROMETRY [LARGE SCALE ANALYSIS]</scope>
</reference>
<reference key="10">
    <citation type="journal article" date="2012" name="Proc. Natl. Acad. Sci. U.S.A.">
        <title>N-terminal acetylome analyses and functional insights of the N-terminal acetyltransferase NatB.</title>
        <authorList>
            <person name="Van Damme P."/>
            <person name="Lasa M."/>
            <person name="Polevoda B."/>
            <person name="Gazquez C."/>
            <person name="Elosegui-Artola A."/>
            <person name="Kim D.S."/>
            <person name="De Juan-Pardo E."/>
            <person name="Demeyer K."/>
            <person name="Hole K."/>
            <person name="Larrea E."/>
            <person name="Timmerman E."/>
            <person name="Prieto J."/>
            <person name="Arnesen T."/>
            <person name="Sherman F."/>
            <person name="Gevaert K."/>
            <person name="Aldabe R."/>
        </authorList>
    </citation>
    <scope>ACETYLATION [LARGE SCALE ANALYSIS] AT MET-1</scope>
    <scope>IDENTIFICATION BY MASS SPECTROMETRY [LARGE SCALE ANALYSIS]</scope>
</reference>
<dbReference type="EMBL" id="AF514997">
    <property type="protein sequence ID" value="AAM76708.1"/>
    <property type="molecule type" value="mRNA"/>
</dbReference>
<dbReference type="EMBL" id="AK023349">
    <property type="protein sequence ID" value="BAB14536.1"/>
    <property type="status" value="ALT_INIT"/>
    <property type="molecule type" value="mRNA"/>
</dbReference>
<dbReference type="EMBL" id="AK304244">
    <property type="protein sequence ID" value="BAG65112.1"/>
    <property type="molecule type" value="mRNA"/>
</dbReference>
<dbReference type="EMBL" id="AL355312">
    <property type="status" value="NOT_ANNOTATED_CDS"/>
    <property type="molecule type" value="Genomic_DNA"/>
</dbReference>
<dbReference type="EMBL" id="BC065028">
    <property type="protein sequence ID" value="AAH65028.1"/>
    <property type="molecule type" value="mRNA"/>
</dbReference>
<dbReference type="CCDS" id="CCDS5218.1">
    <molecule id="Q8NFH3-1"/>
</dbReference>
<dbReference type="RefSeq" id="NP_942590.1">
    <molecule id="Q8NFH3-1"/>
    <property type="nucleotide sequence ID" value="NM_198887.3"/>
</dbReference>
<dbReference type="RefSeq" id="XP_047274684.1">
    <molecule id="Q8NFH3-1"/>
    <property type="nucleotide sequence ID" value="XM_047418728.1"/>
</dbReference>
<dbReference type="PDB" id="4I79">
    <property type="method" value="X-ray"/>
    <property type="resolution" value="1.75 A"/>
    <property type="chains" value="A/B=1-380"/>
</dbReference>
<dbReference type="PDB" id="5A9Q">
    <property type="method" value="EM"/>
    <property type="resolution" value="23.00 A"/>
    <property type="chains" value="0/9/I/R=1-380"/>
</dbReference>
<dbReference type="PDB" id="7PEQ">
    <property type="method" value="EM"/>
    <property type="resolution" value="35.00 A"/>
    <property type="chains" value="AI/BI/CI/DI=1-380"/>
</dbReference>
<dbReference type="PDB" id="7R5J">
    <property type="method" value="EM"/>
    <property type="resolution" value="50.00 A"/>
    <property type="chains" value="Q0/Q1/Q2/Q3=1-380"/>
</dbReference>
<dbReference type="PDB" id="7R5K">
    <property type="method" value="EM"/>
    <property type="resolution" value="12.00 A"/>
    <property type="chains" value="Q0/Q1/Q2/Q3=1-380"/>
</dbReference>
<dbReference type="PDBsum" id="4I79"/>
<dbReference type="PDBsum" id="5A9Q"/>
<dbReference type="PDBsum" id="7PEQ"/>
<dbReference type="PDBsum" id="7R5J"/>
<dbReference type="PDBsum" id="7R5K"/>
<dbReference type="EMDB" id="EMD-14321"/>
<dbReference type="EMDB" id="EMD-14322"/>
<dbReference type="SMR" id="Q8NFH3"/>
<dbReference type="BioGRID" id="131544">
    <property type="interactions" value="631"/>
</dbReference>
<dbReference type="ComplexPortal" id="CPX-873">
    <property type="entry name" value="Nuclear pore complex"/>
</dbReference>
<dbReference type="CORUM" id="Q8NFH3"/>
<dbReference type="FunCoup" id="Q8NFH3">
    <property type="interactions" value="4076"/>
</dbReference>
<dbReference type="IntAct" id="Q8NFH3">
    <property type="interactions" value="59"/>
</dbReference>
<dbReference type="MINT" id="Q8NFH3"/>
<dbReference type="STRING" id="9606.ENSP00000342262"/>
<dbReference type="TCDB" id="1.I.1.1.3">
    <property type="family name" value="the nuclear pore complex (npc) family"/>
</dbReference>
<dbReference type="GlyGen" id="Q8NFH3">
    <property type="glycosylation" value="1 site, 1 O-linked glycan (1 site)"/>
</dbReference>
<dbReference type="iPTMnet" id="Q8NFH3"/>
<dbReference type="PhosphoSitePlus" id="Q8NFH3"/>
<dbReference type="SwissPalm" id="Q8NFH3"/>
<dbReference type="BioMuta" id="NUP43"/>
<dbReference type="DMDM" id="27923819"/>
<dbReference type="jPOST" id="Q8NFH3"/>
<dbReference type="MassIVE" id="Q8NFH3"/>
<dbReference type="PaxDb" id="9606-ENSP00000342262"/>
<dbReference type="PeptideAtlas" id="Q8NFH3"/>
<dbReference type="ProteomicsDB" id="5814"/>
<dbReference type="ProteomicsDB" id="73305">
    <molecule id="Q8NFH3-1"/>
</dbReference>
<dbReference type="Pumba" id="Q8NFH3"/>
<dbReference type="Antibodypedia" id="33283">
    <property type="antibodies" value="254 antibodies from 23 providers"/>
</dbReference>
<dbReference type="DNASU" id="348995"/>
<dbReference type="Ensembl" id="ENST00000340413.7">
    <molecule id="Q8NFH3-1"/>
    <property type="protein sequence ID" value="ENSP00000342262.2"/>
    <property type="gene ID" value="ENSG00000120253.14"/>
</dbReference>
<dbReference type="Ensembl" id="ENST00000367404.8">
    <molecule id="Q8NFH3-2"/>
    <property type="protein sequence ID" value="ENSP00000356374.4"/>
    <property type="gene ID" value="ENSG00000120253.14"/>
</dbReference>
<dbReference type="GeneID" id="348995"/>
<dbReference type="KEGG" id="hsa:348995"/>
<dbReference type="MANE-Select" id="ENST00000340413.7">
    <property type="protein sequence ID" value="ENSP00000342262.2"/>
    <property type="RefSeq nucleotide sequence ID" value="NM_198887.3"/>
    <property type="RefSeq protein sequence ID" value="NP_942590.1"/>
</dbReference>
<dbReference type="UCSC" id="uc003qmz.5">
    <molecule id="Q8NFH3-1"/>
    <property type="organism name" value="human"/>
</dbReference>
<dbReference type="AGR" id="HGNC:21182"/>
<dbReference type="CTD" id="348995"/>
<dbReference type="DisGeNET" id="348995"/>
<dbReference type="GeneCards" id="NUP43"/>
<dbReference type="HGNC" id="HGNC:21182">
    <property type="gene designation" value="NUP43"/>
</dbReference>
<dbReference type="HPA" id="ENSG00000120253">
    <property type="expression patterns" value="Low tissue specificity"/>
</dbReference>
<dbReference type="MIM" id="608141">
    <property type="type" value="gene"/>
</dbReference>
<dbReference type="neXtProt" id="NX_Q8NFH3"/>
<dbReference type="OpenTargets" id="ENSG00000120253"/>
<dbReference type="PharmGKB" id="PA134930788"/>
<dbReference type="VEuPathDB" id="HostDB:ENSG00000120253"/>
<dbReference type="eggNOG" id="KOG4714">
    <property type="taxonomic scope" value="Eukaryota"/>
</dbReference>
<dbReference type="GeneTree" id="ENSGT00390000004803"/>
<dbReference type="HOGENOM" id="CLU_060663_1_0_1"/>
<dbReference type="InParanoid" id="Q8NFH3"/>
<dbReference type="OMA" id="HDGDVMD"/>
<dbReference type="OrthoDB" id="9890280at2759"/>
<dbReference type="PAN-GO" id="Q8NFH3">
    <property type="GO annotations" value="1 GO annotation based on evolutionary models"/>
</dbReference>
<dbReference type="PhylomeDB" id="Q8NFH3"/>
<dbReference type="TreeFam" id="TF321692"/>
<dbReference type="PathwayCommons" id="Q8NFH3"/>
<dbReference type="Reactome" id="R-HSA-1169408">
    <property type="pathway name" value="ISG15 antiviral mechanism"/>
</dbReference>
<dbReference type="Reactome" id="R-HSA-141444">
    <property type="pathway name" value="Amplification of signal from unattached kinetochores via a MAD2 inhibitory signal"/>
</dbReference>
<dbReference type="Reactome" id="R-HSA-159227">
    <property type="pathway name" value="Transport of the SLBP independent Mature mRNA"/>
</dbReference>
<dbReference type="Reactome" id="R-HSA-159230">
    <property type="pathway name" value="Transport of the SLBP Dependant Mature mRNA"/>
</dbReference>
<dbReference type="Reactome" id="R-HSA-159231">
    <property type="pathway name" value="Transport of Mature mRNA Derived from an Intronless Transcript"/>
</dbReference>
<dbReference type="Reactome" id="R-HSA-159236">
    <property type="pathway name" value="Transport of Mature mRNA derived from an Intron-Containing Transcript"/>
</dbReference>
<dbReference type="Reactome" id="R-HSA-165054">
    <property type="pathway name" value="Rev-mediated nuclear export of HIV RNA"/>
</dbReference>
<dbReference type="Reactome" id="R-HSA-168271">
    <property type="pathway name" value="Transport of Ribonucleoproteins into the Host Nucleus"/>
</dbReference>
<dbReference type="Reactome" id="R-HSA-168276">
    <property type="pathway name" value="NS1 Mediated Effects on Host Pathways"/>
</dbReference>
<dbReference type="Reactome" id="R-HSA-168325">
    <property type="pathway name" value="Viral Messenger RNA Synthesis"/>
</dbReference>
<dbReference type="Reactome" id="R-HSA-168333">
    <property type="pathway name" value="NEP/NS2 Interacts with the Cellular Export Machinery"/>
</dbReference>
<dbReference type="Reactome" id="R-HSA-170822">
    <property type="pathway name" value="Regulation of Glucokinase by Glucokinase Regulatory Protein"/>
</dbReference>
<dbReference type="Reactome" id="R-HSA-180746">
    <property type="pathway name" value="Nuclear import of Rev protein"/>
</dbReference>
<dbReference type="Reactome" id="R-HSA-180910">
    <property type="pathway name" value="Vpr-mediated nuclear import of PICs"/>
</dbReference>
<dbReference type="Reactome" id="R-HSA-191859">
    <property type="pathway name" value="snRNP Assembly"/>
</dbReference>
<dbReference type="Reactome" id="R-HSA-2467813">
    <property type="pathway name" value="Separation of Sister Chromatids"/>
</dbReference>
<dbReference type="Reactome" id="R-HSA-2500257">
    <property type="pathway name" value="Resolution of Sister Chromatid Cohesion"/>
</dbReference>
<dbReference type="Reactome" id="R-HSA-3108214">
    <property type="pathway name" value="SUMOylation of DNA damage response and repair proteins"/>
</dbReference>
<dbReference type="Reactome" id="R-HSA-3232142">
    <property type="pathway name" value="SUMOylation of ubiquitinylation proteins"/>
</dbReference>
<dbReference type="Reactome" id="R-HSA-3301854">
    <property type="pathway name" value="Nuclear Pore Complex (NPC) Disassembly"/>
</dbReference>
<dbReference type="Reactome" id="R-HSA-3371453">
    <property type="pathway name" value="Regulation of HSF1-mediated heat shock response"/>
</dbReference>
<dbReference type="Reactome" id="R-HSA-4085377">
    <property type="pathway name" value="SUMOylation of SUMOylation proteins"/>
</dbReference>
<dbReference type="Reactome" id="R-HSA-4551638">
    <property type="pathway name" value="SUMOylation of chromatin organization proteins"/>
</dbReference>
<dbReference type="Reactome" id="R-HSA-4570464">
    <property type="pathway name" value="SUMOylation of RNA binding proteins"/>
</dbReference>
<dbReference type="Reactome" id="R-HSA-4615885">
    <property type="pathway name" value="SUMOylation of DNA replication proteins"/>
</dbReference>
<dbReference type="Reactome" id="R-HSA-5578749">
    <property type="pathway name" value="Transcriptional regulation by small RNAs"/>
</dbReference>
<dbReference type="Reactome" id="R-HSA-5619107">
    <property type="pathway name" value="Defective TPR may confer susceptibility towards thyroid papillary carcinoma (TPC)"/>
</dbReference>
<dbReference type="Reactome" id="R-HSA-5663220">
    <property type="pathway name" value="RHO GTPases Activate Formins"/>
</dbReference>
<dbReference type="Reactome" id="R-HSA-6784531">
    <property type="pathway name" value="tRNA processing in the nucleus"/>
</dbReference>
<dbReference type="Reactome" id="R-HSA-68877">
    <property type="pathway name" value="Mitotic Prometaphase"/>
</dbReference>
<dbReference type="Reactome" id="R-HSA-9609690">
    <property type="pathway name" value="HCMV Early Events"/>
</dbReference>
<dbReference type="Reactome" id="R-HSA-9610379">
    <property type="pathway name" value="HCMV Late Events"/>
</dbReference>
<dbReference type="Reactome" id="R-HSA-9615933">
    <property type="pathway name" value="Postmitotic nuclear pore complex (NPC) reformation"/>
</dbReference>
<dbReference type="Reactome" id="R-HSA-9648025">
    <property type="pathway name" value="EML4 and NUDC in mitotic spindle formation"/>
</dbReference>
<dbReference type="Reactome" id="R-HSA-9705671">
    <property type="pathway name" value="SARS-CoV-2 activates/modulates innate and adaptive immune responses"/>
</dbReference>
<dbReference type="SignaLink" id="Q8NFH3"/>
<dbReference type="SIGNOR" id="Q8NFH3"/>
<dbReference type="BioGRID-ORCS" id="348995">
    <property type="hits" value="683 hits in 1182 CRISPR screens"/>
</dbReference>
<dbReference type="ChiTaRS" id="NUP43">
    <property type="organism name" value="human"/>
</dbReference>
<dbReference type="EvolutionaryTrace" id="Q8NFH3"/>
<dbReference type="GeneWiki" id="NUP43"/>
<dbReference type="GenomeRNAi" id="348995"/>
<dbReference type="Pharos" id="Q8NFH3">
    <property type="development level" value="Tbio"/>
</dbReference>
<dbReference type="PRO" id="PR:Q8NFH3"/>
<dbReference type="Proteomes" id="UP000005640">
    <property type="component" value="Chromosome 6"/>
</dbReference>
<dbReference type="RNAct" id="Q8NFH3">
    <property type="molecule type" value="protein"/>
</dbReference>
<dbReference type="Bgee" id="ENSG00000120253">
    <property type="expression patterns" value="Expressed in oocyte and 207 other cell types or tissues"/>
</dbReference>
<dbReference type="ExpressionAtlas" id="Q8NFH3">
    <property type="expression patterns" value="baseline and differential"/>
</dbReference>
<dbReference type="GO" id="GO:0005829">
    <property type="term" value="C:cytosol"/>
    <property type="evidence" value="ECO:0000314"/>
    <property type="project" value="HPA"/>
</dbReference>
<dbReference type="GO" id="GO:0000776">
    <property type="term" value="C:kinetochore"/>
    <property type="evidence" value="ECO:0007669"/>
    <property type="project" value="UniProtKB-KW"/>
</dbReference>
<dbReference type="GO" id="GO:0005635">
    <property type="term" value="C:nuclear envelope"/>
    <property type="evidence" value="ECO:0000314"/>
    <property type="project" value="ComplexPortal"/>
</dbReference>
<dbReference type="GO" id="GO:0005643">
    <property type="term" value="C:nuclear pore"/>
    <property type="evidence" value="ECO:0000303"/>
    <property type="project" value="ComplexPortal"/>
</dbReference>
<dbReference type="GO" id="GO:0031080">
    <property type="term" value="C:nuclear pore outer ring"/>
    <property type="evidence" value="ECO:0000314"/>
    <property type="project" value="UniProtKB"/>
</dbReference>
<dbReference type="GO" id="GO:0016607">
    <property type="term" value="C:nuclear speck"/>
    <property type="evidence" value="ECO:0000314"/>
    <property type="project" value="HPA"/>
</dbReference>
<dbReference type="GO" id="GO:0005654">
    <property type="term" value="C:nucleoplasm"/>
    <property type="evidence" value="ECO:0000314"/>
    <property type="project" value="HPA"/>
</dbReference>
<dbReference type="GO" id="GO:0051301">
    <property type="term" value="P:cell division"/>
    <property type="evidence" value="ECO:0007669"/>
    <property type="project" value="UniProtKB-KW"/>
</dbReference>
<dbReference type="GO" id="GO:0007059">
    <property type="term" value="P:chromosome segregation"/>
    <property type="evidence" value="ECO:0007669"/>
    <property type="project" value="UniProtKB-KW"/>
</dbReference>
<dbReference type="GO" id="GO:0051028">
    <property type="term" value="P:mRNA transport"/>
    <property type="evidence" value="ECO:0007669"/>
    <property type="project" value="UniProtKB-KW"/>
</dbReference>
<dbReference type="GO" id="GO:0006913">
    <property type="term" value="P:nucleocytoplasmic transport"/>
    <property type="evidence" value="ECO:0000303"/>
    <property type="project" value="ComplexPortal"/>
</dbReference>
<dbReference type="GO" id="GO:0015031">
    <property type="term" value="P:protein transport"/>
    <property type="evidence" value="ECO:0007669"/>
    <property type="project" value="UniProtKB-KW"/>
</dbReference>
<dbReference type="Gene3D" id="2.130.10.10">
    <property type="entry name" value="YVTN repeat-like/Quinoprotein amine dehydrogenase"/>
    <property type="match status" value="1"/>
</dbReference>
<dbReference type="InterPro" id="IPR015943">
    <property type="entry name" value="WD40/YVTN_repeat-like_dom_sf"/>
</dbReference>
<dbReference type="InterPro" id="IPR019775">
    <property type="entry name" value="WD40_repeat_CS"/>
</dbReference>
<dbReference type="InterPro" id="IPR036322">
    <property type="entry name" value="WD40_repeat_dom_sf"/>
</dbReference>
<dbReference type="InterPro" id="IPR001680">
    <property type="entry name" value="WD40_rpt"/>
</dbReference>
<dbReference type="PANTHER" id="PTHR22652">
    <property type="entry name" value="NUCLEOPORIN NUP43"/>
    <property type="match status" value="1"/>
</dbReference>
<dbReference type="PANTHER" id="PTHR22652:SF0">
    <property type="entry name" value="NUCLEOPORIN NUP43"/>
    <property type="match status" value="1"/>
</dbReference>
<dbReference type="Pfam" id="PF00400">
    <property type="entry name" value="WD40"/>
    <property type="match status" value="2"/>
</dbReference>
<dbReference type="SMART" id="SM00320">
    <property type="entry name" value="WD40"/>
    <property type="match status" value="5"/>
</dbReference>
<dbReference type="SUPFAM" id="SSF50978">
    <property type="entry name" value="WD40 repeat-like"/>
    <property type="match status" value="1"/>
</dbReference>
<dbReference type="PROSITE" id="PS00678">
    <property type="entry name" value="WD_REPEATS_1"/>
    <property type="match status" value="1"/>
</dbReference>
<dbReference type="PROSITE" id="PS50082">
    <property type="entry name" value="WD_REPEATS_2"/>
    <property type="match status" value="2"/>
</dbReference>
<dbReference type="PROSITE" id="PS50294">
    <property type="entry name" value="WD_REPEATS_REGION"/>
    <property type="match status" value="1"/>
</dbReference>
<keyword id="KW-0002">3D-structure</keyword>
<keyword id="KW-0007">Acetylation</keyword>
<keyword id="KW-0025">Alternative splicing</keyword>
<keyword id="KW-0131">Cell cycle</keyword>
<keyword id="KW-0132">Cell division</keyword>
<keyword id="KW-0137">Centromere</keyword>
<keyword id="KW-0158">Chromosome</keyword>
<keyword id="KW-0159">Chromosome partition</keyword>
<keyword id="KW-0995">Kinetochore</keyword>
<keyword id="KW-0498">Mitosis</keyword>
<keyword id="KW-0509">mRNA transport</keyword>
<keyword id="KW-0906">Nuclear pore complex</keyword>
<keyword id="KW-0539">Nucleus</keyword>
<keyword id="KW-0653">Protein transport</keyword>
<keyword id="KW-1267">Proteomics identification</keyword>
<keyword id="KW-1185">Reference proteome</keyword>
<keyword id="KW-0677">Repeat</keyword>
<keyword id="KW-0811">Translocation</keyword>
<keyword id="KW-0813">Transport</keyword>
<keyword id="KW-0853">WD repeat</keyword>
<sequence length="380" mass="42151">MEEIYAKFVSQKISKTRWRPLPPGSLQTAETFATGSWDNEENYISLWSIGDFGNLDSDGGFEGDHQLLCDIRHHGDVMDLQFFDQERIVAASSTGCVTVFLHHPNNQTLSVNQQWTTAHYHTGPGSPSYSSAPCTGVVCNNPEIVTVGEDGRINLFRADHKEAVRTIDNADSSTLHAVTFLRTPEILTVNSIGQLKIWDFRQQGNEPSQILSLTGDRVPLHCVDRHPNQQHVVATGGQDGMLSIWDVRQGTMPVSLLKAHEAEMWEVHFHPSNPEHLFTCSEDGSLWHWDASTDVPEKSSLFHQGGRSSTFLSHSISNQANVHQSVISSWLSTDPAKDRIEITSLLPSRSLSVNTLDVLGPCLVCGTDAEAIYVTRHLFS</sequence>
<comment type="function">
    <text evidence="3">Component of the Nup107-160 subcomplex of the nuclear pore complex (NPC). The Nup107-160 subcomplex is required for the assembly of a functional NPC. The Nup107-160 subcomplex is also required for normal kinetochore microtubule attachment, mitotic progression and chromosome segregation.</text>
</comment>
<comment type="subunit">
    <text evidence="1 2">Component of the Nup107-160 subcomplex of the nuclear pore complex (NPC). The Nup107-160 subcomplex includes NUP160, NUP133, NUP107, NUP98, NUP85, NUP43, NUP37, SEH1 and SEC13.</text>
</comment>
<comment type="interaction">
    <interactant intactId="EBI-1059321">
        <id>Q8NFH3</id>
    </interactant>
    <interactant intactId="EBI-930964">
        <id>P54253</id>
        <label>ATXN1</label>
    </interactant>
    <organismsDiffer>false</organismsDiffer>
    <experiments>6</experiments>
</comment>
<comment type="interaction">
    <interactant intactId="EBI-1059321">
        <id>Q8NFH3</id>
    </interactant>
    <interactant intactId="EBI-946046">
        <id>P54252</id>
        <label>ATXN3</label>
    </interactant>
    <organismsDiffer>false</organismsDiffer>
    <experiments>3</experiments>
</comment>
<comment type="interaction">
    <interactant intactId="EBI-1059321">
        <id>Q8NFH3</id>
    </interactant>
    <interactant intactId="EBI-718729">
        <id>P55212</id>
        <label>CASP6</label>
    </interactant>
    <organismsDiffer>false</organismsDiffer>
    <experiments>3</experiments>
</comment>
<comment type="interaction">
    <interactant intactId="EBI-1059321">
        <id>Q8NFH3</id>
    </interactant>
    <interactant intactId="EBI-6624398">
        <id>P06307</id>
        <label>CCK</label>
    </interactant>
    <organismsDiffer>false</organismsDiffer>
    <experiments>3</experiments>
</comment>
<comment type="interaction">
    <interactant intactId="EBI-1059321">
        <id>Q8NFH3</id>
    </interactant>
    <interactant intactId="EBI-7133736">
        <id>P07686</id>
        <label>HEXB</label>
    </interactant>
    <organismsDiffer>false</organismsDiffer>
    <experiments>3</experiments>
</comment>
<comment type="interaction">
    <interactant intactId="EBI-1059321">
        <id>Q8NFH3</id>
    </interactant>
    <interactant intactId="EBI-21591415">
        <id>P13473-2</id>
        <label>LAMP2</label>
    </interactant>
    <organismsDiffer>false</organismsDiffer>
    <experiments>3</experiments>
</comment>
<comment type="interaction">
    <interactant intactId="EBI-1059321">
        <id>Q8NFH3</id>
    </interactant>
    <interactant intactId="EBI-1164361">
        <id>Q99497</id>
        <label>PARK7</label>
    </interactant>
    <organismsDiffer>false</organismsDiffer>
    <experiments>3</experiments>
</comment>
<comment type="interaction">
    <interactant intactId="EBI-1059321">
        <id>Q8NFH3</id>
    </interactant>
    <interactant intactId="EBI-5280197">
        <id>O75400-2</id>
        <label>PRPF40A</label>
    </interactant>
    <organismsDiffer>false</organismsDiffer>
    <experiments>3</experiments>
</comment>
<comment type="interaction">
    <interactant intactId="EBI-1059321">
        <id>Q8NFH3</id>
    </interactant>
    <interactant intactId="EBI-372899">
        <id>Q13148</id>
        <label>TARDBP</label>
    </interactant>
    <organismsDiffer>false</organismsDiffer>
    <experiments>3</experiments>
</comment>
<comment type="interaction">
    <interactant intactId="EBI-1059321">
        <id>Q8NFH3</id>
    </interactant>
    <interactant intactId="EBI-711909">
        <id>P02766</id>
        <label>TTR</label>
    </interactant>
    <organismsDiffer>false</organismsDiffer>
    <experiments>3</experiments>
</comment>
<comment type="subcellular location">
    <subcellularLocation>
        <location>Chromosome</location>
        <location>Centromere</location>
        <location>Kinetochore</location>
    </subcellularLocation>
    <subcellularLocation>
        <location>Nucleus</location>
        <location>Nuclear pore complex</location>
    </subcellularLocation>
</comment>
<comment type="alternative products">
    <event type="alternative splicing"/>
    <isoform>
        <id>Q8NFH3-1</id>
        <name>1</name>
        <sequence type="displayed"/>
    </isoform>
    <isoform>
        <id>Q8NFH3-2</id>
        <name>2</name>
        <sequence type="described" ref="VSP_056167"/>
    </isoform>
</comment>
<comment type="sequence caution" evidence="5">
    <conflict type="erroneous initiation">
        <sequence resource="EMBL-CDS" id="BAB14536"/>
    </conflict>
</comment>
<name>NUP43_HUMAN</name>
<accession>Q8NFH3</accession>
<accession>B4E2F0</accession>
<accession>Q9H8S0</accession>
<protein>
    <recommendedName>
        <fullName>Nucleoporin Nup43</fullName>
    </recommendedName>
    <alternativeName>
        <fullName>Nup107-160 subcomplex subunit Nup43</fullName>
    </alternativeName>
    <alternativeName>
        <fullName>p42</fullName>
    </alternativeName>
</protein>
<gene>
    <name type="primary">NUP43</name>
</gene>